<reference key="1">
    <citation type="submission" date="2001-09" db="EMBL/GenBank/DDBJ databases">
        <authorList>
            <person name="Kile B.T."/>
            <person name="Hilton D.J."/>
            <person name="Nicola N.A."/>
        </authorList>
    </citation>
    <scope>NUCLEOTIDE SEQUENCE [MRNA]</scope>
    <source>
        <strain>C57BL/6J</strain>
    </source>
</reference>
<reference key="2">
    <citation type="journal article" date="2004" name="Genome Res.">
        <title>The status, quality, and expansion of the NIH full-length cDNA project: the Mammalian Gene Collection (MGC).</title>
        <authorList>
            <consortium name="The MGC Project Team"/>
        </authorList>
    </citation>
    <scope>NUCLEOTIDE SEQUENCE [LARGE SCALE MRNA]</scope>
    <source>
        <tissue>Eye</tissue>
    </source>
</reference>
<reference key="3">
    <citation type="journal article" date="2010" name="Cell">
        <title>A tissue-specific atlas of mouse protein phosphorylation and expression.</title>
        <authorList>
            <person name="Huttlin E.L."/>
            <person name="Jedrychowski M.P."/>
            <person name="Elias J.E."/>
            <person name="Goswami T."/>
            <person name="Rad R."/>
            <person name="Beausoleil S.A."/>
            <person name="Villen J."/>
            <person name="Haas W."/>
            <person name="Sowa M.E."/>
            <person name="Gygi S.P."/>
        </authorList>
    </citation>
    <scope>IDENTIFICATION BY MASS SPECTROMETRY [LARGE SCALE ANALYSIS]</scope>
    <source>
        <tissue>Testis</tissue>
    </source>
</reference>
<organism>
    <name type="scientific">Mus musculus</name>
    <name type="common">Mouse</name>
    <dbReference type="NCBI Taxonomy" id="10090"/>
    <lineage>
        <taxon>Eukaryota</taxon>
        <taxon>Metazoa</taxon>
        <taxon>Chordata</taxon>
        <taxon>Craniata</taxon>
        <taxon>Vertebrata</taxon>
        <taxon>Euteleostomi</taxon>
        <taxon>Mammalia</taxon>
        <taxon>Eutheria</taxon>
        <taxon>Euarchontoglires</taxon>
        <taxon>Glires</taxon>
        <taxon>Rodentia</taxon>
        <taxon>Myomorpha</taxon>
        <taxon>Muroidea</taxon>
        <taxon>Muridae</taxon>
        <taxon>Murinae</taxon>
        <taxon>Mus</taxon>
        <taxon>Mus</taxon>
    </lineage>
</organism>
<accession>Q8VHQ4</accession>
<feature type="chain" id="PRO_0000121262" description="Ras-related protein Rab-40C">
    <location>
        <begin position="1"/>
        <end position="281"/>
    </location>
</feature>
<feature type="domain" description="SOCS box" evidence="4">
    <location>
        <begin position="175"/>
        <end position="228"/>
    </location>
</feature>
<feature type="region of interest" description="Switch-I" evidence="5">
    <location>
        <begin position="41"/>
        <end position="49"/>
    </location>
</feature>
<feature type="region of interest" description="Switch-II" evidence="5">
    <location>
        <begin position="72"/>
        <end position="88"/>
    </location>
</feature>
<feature type="region of interest" description="Disordered" evidence="6">
    <location>
        <begin position="245"/>
        <end position="281"/>
    </location>
</feature>
<feature type="compositionally biased region" description="Polar residues" evidence="6">
    <location>
        <begin position="270"/>
        <end position="281"/>
    </location>
</feature>
<feature type="binding site" evidence="1">
    <location>
        <position position="23"/>
    </location>
    <ligand>
        <name>GTP</name>
        <dbReference type="ChEBI" id="CHEBI:37565"/>
    </ligand>
</feature>
<feature type="binding site" evidence="1">
    <location>
        <position position="26"/>
    </location>
    <ligand>
        <name>GTP</name>
        <dbReference type="ChEBI" id="CHEBI:37565"/>
    </ligand>
</feature>
<feature type="binding site" evidence="1">
    <location>
        <position position="27"/>
    </location>
    <ligand>
        <name>GTP</name>
        <dbReference type="ChEBI" id="CHEBI:37565"/>
    </ligand>
</feature>
<feature type="binding site" evidence="1">
    <location>
        <position position="46"/>
    </location>
    <ligand>
        <name>GTP</name>
        <dbReference type="ChEBI" id="CHEBI:37565"/>
    </ligand>
</feature>
<feature type="binding site" evidence="1">
    <location>
        <position position="46"/>
    </location>
    <ligand>
        <name>Mg(2+)</name>
        <dbReference type="ChEBI" id="CHEBI:18420"/>
    </ligand>
</feature>
<feature type="binding site" evidence="1">
    <location>
        <position position="69"/>
    </location>
    <ligand>
        <name>Mg(2+)</name>
        <dbReference type="ChEBI" id="CHEBI:18420"/>
    </ligand>
</feature>
<feature type="binding site" evidence="1">
    <location>
        <position position="72"/>
    </location>
    <ligand>
        <name>GTP</name>
        <dbReference type="ChEBI" id="CHEBI:37565"/>
    </ligand>
</feature>
<feature type="binding site" evidence="1">
    <location>
        <position position="126"/>
    </location>
    <ligand>
        <name>GTP</name>
        <dbReference type="ChEBI" id="CHEBI:37565"/>
    </ligand>
</feature>
<feature type="binding site" evidence="1">
    <location>
        <position position="127"/>
    </location>
    <ligand>
        <name>GTP</name>
        <dbReference type="ChEBI" id="CHEBI:37565"/>
    </ligand>
</feature>
<feature type="lipid moiety-binding region" description="S-palmitoyl cysteine" evidence="3">
    <location>
        <position position="273"/>
    </location>
</feature>
<feature type="lipid moiety-binding region" description="S-geranylgeranyl cysteine" evidence="1">
    <location>
        <position position="278"/>
    </location>
</feature>
<protein>
    <recommendedName>
        <fullName>Ras-related protein Rab-40C</fullName>
        <ecNumber evidence="1">3.6.5.2</ecNumber>
    </recommendedName>
    <alternativeName>
        <fullName>SOCS box-containing protein RAR3</fullName>
    </alternativeName>
</protein>
<name>RB40C_MOUSE</name>
<gene>
    <name evidence="8" type="primary">Rab40c</name>
</gene>
<proteinExistence type="evidence at protein level"/>
<evidence type="ECO:0000250" key="1">
    <source>
        <dbReference type="UniProtKB" id="P62820"/>
    </source>
</evidence>
<evidence type="ECO:0000250" key="2">
    <source>
        <dbReference type="UniProtKB" id="Q96S21"/>
    </source>
</evidence>
<evidence type="ECO:0000255" key="3"/>
<evidence type="ECO:0000255" key="4">
    <source>
        <dbReference type="PROSITE-ProRule" id="PRU00194"/>
    </source>
</evidence>
<evidence type="ECO:0000255" key="5">
    <source>
        <dbReference type="PROSITE-ProRule" id="PRU00753"/>
    </source>
</evidence>
<evidence type="ECO:0000256" key="6">
    <source>
        <dbReference type="SAM" id="MobiDB-lite"/>
    </source>
</evidence>
<evidence type="ECO:0000305" key="7"/>
<evidence type="ECO:0000312" key="8">
    <source>
        <dbReference type="MGI" id="MGI:2183454"/>
    </source>
</evidence>
<comment type="function">
    <text evidence="2">RAB40C small GTPase acts as substrate-recognition component of the ECS(RAB40C) E3 ubiquitin ligase complex which mediates the ubiquitination and subsequent proteasomal degradation of target proteins. The Rab40 subfamily belongs to the Rab family that are key regulators of intracellular membrane trafficking, from the formation of transport vesicles to their fusion with membranes. Rabs cycle between an inactive GDP-bound form and an active GTP-bound form that is able to recruit to membranes different sets of downstream effectors directly responsible for vesicle formation, movement, tethering and fusion. As part of the ECS(RAB40C) complex, mediates ANKRD28 ubiquitination and degradation, thereby inhibiting protein phosphatase 6 (PP6) complex activity and focal adhesion assembly during cell migration. Also negatively regulate lipid droplets accumulation in a GTP-dependent manner.</text>
</comment>
<comment type="catalytic activity">
    <reaction evidence="1">
        <text>GTP + H2O = GDP + phosphate + H(+)</text>
        <dbReference type="Rhea" id="RHEA:19669"/>
        <dbReference type="ChEBI" id="CHEBI:15377"/>
        <dbReference type="ChEBI" id="CHEBI:15378"/>
        <dbReference type="ChEBI" id="CHEBI:37565"/>
        <dbReference type="ChEBI" id="CHEBI:43474"/>
        <dbReference type="ChEBI" id="CHEBI:58189"/>
        <dbReference type="EC" id="3.6.5.2"/>
    </reaction>
    <physiologicalReaction direction="left-to-right" evidence="1">
        <dbReference type="Rhea" id="RHEA:19670"/>
    </physiologicalReaction>
</comment>
<comment type="cofactor">
    <cofactor evidence="1">
        <name>Mg(2+)</name>
        <dbReference type="ChEBI" id="CHEBI:18420"/>
    </cofactor>
</comment>
<comment type="activity regulation">
    <text evidence="2">Regulated by guanine nucleotide exchange factors (GEFs) which promote the exchange of bound GDP for free GTP. Regulated by GTPase activating proteins (GAPs) including DAB2IP, which increase the GTP hydrolysis activity. Inhibited by GDP dissociation inhibitors (GDIs).</text>
</comment>
<comment type="pathway">
    <text>Protein modification; protein ubiquitination.</text>
</comment>
<comment type="subunit">
    <text evidence="2">Component of the cullin-5-RING E3 ubiquitin-protein ligase complex (ECS(RAB40C) complex) composed of CUL5, Elongin BC (ELOB and ELOC), RNF7/RBX2 and RAB40C. Interacts with protein phosphatase 6 (PP6) complex components ANKRD28, ANKRD52, PPP6C, PP6R1 and PP6R2; the interaction leads to ANKRD28 ubiquitination and decreased PP6 activity. Interacts with DAB2IP; DAB2IP acts as a GAP for RAB40C.</text>
</comment>
<comment type="subcellular location">
    <subcellularLocation>
        <location evidence="7">Cell membrane</location>
        <topology evidence="7">Lipid-anchor</topology>
        <orientation evidence="7">Cytoplasmic side</orientation>
    </subcellularLocation>
    <subcellularLocation>
        <location evidence="2">Cytoplasm</location>
        <location evidence="2">Cytosol</location>
    </subcellularLocation>
    <subcellularLocation>
        <location evidence="2">Golgi apparatus membrane</location>
    </subcellularLocation>
    <text evidence="2">Mostly localized in the cytosol and also with actin ruffles.</text>
</comment>
<comment type="domain">
    <text evidence="1">Switch I, switch II and the interswitch regions are characteristic of Rab GTPases and mediate the interactions with Rab downstream effectors. The switch regions undergo conformational changes upon nucleotide binding which drive interaction with specific sets of effector proteins, with most effectors only binding to GTP-bound Rab.</text>
</comment>
<comment type="domain">
    <text evidence="2">The SOCS box contains two defined motifs including the BC box that recruits and binds Elongin BC complex, and the Cul box which interacts with the Cullin family of proteinsto form a ECS (Elongin-Cullin-SOCS-box protein) E3 ubiquitin ligase complex.</text>
</comment>
<comment type="similarity">
    <text evidence="7">Belongs to the small GTPase superfamily. Rab family.</text>
</comment>
<keyword id="KW-1003">Cell membrane</keyword>
<keyword id="KW-0963">Cytoplasm</keyword>
<keyword id="KW-0333">Golgi apparatus</keyword>
<keyword id="KW-0342">GTP-binding</keyword>
<keyword id="KW-0378">Hydrolase</keyword>
<keyword id="KW-0449">Lipoprotein</keyword>
<keyword id="KW-0460">Magnesium</keyword>
<keyword id="KW-0472">Membrane</keyword>
<keyword id="KW-0479">Metal-binding</keyword>
<keyword id="KW-0547">Nucleotide-binding</keyword>
<keyword id="KW-0564">Palmitate</keyword>
<keyword id="KW-0636">Prenylation</keyword>
<keyword id="KW-1185">Reference proteome</keyword>
<keyword id="KW-0833">Ubl conjugation pathway</keyword>
<dbReference type="EC" id="3.6.5.2" evidence="1"/>
<dbReference type="EMBL" id="AF422144">
    <property type="protein sequence ID" value="AAL60515.1"/>
    <property type="molecule type" value="mRNA"/>
</dbReference>
<dbReference type="EMBL" id="BC027008">
    <property type="protein sequence ID" value="AAH27008.1"/>
    <property type="molecule type" value="mRNA"/>
</dbReference>
<dbReference type="CCDS" id="CCDS28537.1"/>
<dbReference type="RefSeq" id="NP_631893.1">
    <property type="nucleotide sequence ID" value="NM_139154.2"/>
</dbReference>
<dbReference type="SMR" id="Q8VHQ4"/>
<dbReference type="BioGRID" id="230291">
    <property type="interactions" value="1"/>
</dbReference>
<dbReference type="FunCoup" id="Q8VHQ4">
    <property type="interactions" value="2185"/>
</dbReference>
<dbReference type="IntAct" id="Q8VHQ4">
    <property type="interactions" value="17"/>
</dbReference>
<dbReference type="MINT" id="Q8VHQ4"/>
<dbReference type="STRING" id="10090.ENSMUSP00000127546"/>
<dbReference type="GlyGen" id="Q8VHQ4">
    <property type="glycosylation" value="1 site, 1 O-linked glycan (1 site)"/>
</dbReference>
<dbReference type="iPTMnet" id="Q8VHQ4"/>
<dbReference type="PhosphoSitePlus" id="Q8VHQ4"/>
<dbReference type="PaxDb" id="10090-ENSMUSP00000127546"/>
<dbReference type="ProteomicsDB" id="300251"/>
<dbReference type="Pumba" id="Q8VHQ4"/>
<dbReference type="Antibodypedia" id="35310">
    <property type="antibodies" value="134 antibodies from 23 providers"/>
</dbReference>
<dbReference type="DNASU" id="224624"/>
<dbReference type="Ensembl" id="ENSMUST00000026826.14">
    <property type="protein sequence ID" value="ENSMUSP00000026826.8"/>
    <property type="gene ID" value="ENSMUSG00000025730.16"/>
</dbReference>
<dbReference type="Ensembl" id="ENSMUST00000167626.8">
    <property type="protein sequence ID" value="ENSMUSP00000127546.2"/>
    <property type="gene ID" value="ENSMUSG00000025730.16"/>
</dbReference>
<dbReference type="GeneID" id="224624"/>
<dbReference type="KEGG" id="mmu:224624"/>
<dbReference type="UCSC" id="uc008bco.2">
    <property type="organism name" value="mouse"/>
</dbReference>
<dbReference type="AGR" id="MGI:2183454"/>
<dbReference type="CTD" id="57799"/>
<dbReference type="MGI" id="MGI:2183454">
    <property type="gene designation" value="Rab40c"/>
</dbReference>
<dbReference type="VEuPathDB" id="HostDB:ENSMUSG00000025730"/>
<dbReference type="eggNOG" id="KOG0078">
    <property type="taxonomic scope" value="Eukaryota"/>
</dbReference>
<dbReference type="GeneTree" id="ENSGT00940000158979"/>
<dbReference type="HOGENOM" id="CLU_041217_11_0_1"/>
<dbReference type="InParanoid" id="Q8VHQ4"/>
<dbReference type="OMA" id="HINIGQC"/>
<dbReference type="OrthoDB" id="6339763at2759"/>
<dbReference type="PhylomeDB" id="Q8VHQ4"/>
<dbReference type="TreeFam" id="TF323230"/>
<dbReference type="Reactome" id="R-MMU-8873719">
    <property type="pathway name" value="RAB geranylgeranylation"/>
</dbReference>
<dbReference type="UniPathway" id="UPA00143"/>
<dbReference type="BioGRID-ORCS" id="224624">
    <property type="hits" value="6 hits in 77 CRISPR screens"/>
</dbReference>
<dbReference type="ChiTaRS" id="Rab40c">
    <property type="organism name" value="mouse"/>
</dbReference>
<dbReference type="PRO" id="PR:Q8VHQ4"/>
<dbReference type="Proteomes" id="UP000000589">
    <property type="component" value="Chromosome 17"/>
</dbReference>
<dbReference type="RNAct" id="Q8VHQ4">
    <property type="molecule type" value="protein"/>
</dbReference>
<dbReference type="Bgee" id="ENSMUSG00000025730">
    <property type="expression patterns" value="Expressed in dorsal pancreas and 257 other cell types or tissues"/>
</dbReference>
<dbReference type="ExpressionAtlas" id="Q8VHQ4">
    <property type="expression patterns" value="baseline and differential"/>
</dbReference>
<dbReference type="GO" id="GO:0005794">
    <property type="term" value="C:Golgi apparatus"/>
    <property type="evidence" value="ECO:0007669"/>
    <property type="project" value="Ensembl"/>
</dbReference>
<dbReference type="GO" id="GO:0005811">
    <property type="term" value="C:lipid droplet"/>
    <property type="evidence" value="ECO:0007669"/>
    <property type="project" value="Ensembl"/>
</dbReference>
<dbReference type="GO" id="GO:0005886">
    <property type="term" value="C:plasma membrane"/>
    <property type="evidence" value="ECO:0007669"/>
    <property type="project" value="UniProtKB-SubCell"/>
</dbReference>
<dbReference type="GO" id="GO:0005525">
    <property type="term" value="F:GTP binding"/>
    <property type="evidence" value="ECO:0007669"/>
    <property type="project" value="UniProtKB-KW"/>
</dbReference>
<dbReference type="GO" id="GO:0003924">
    <property type="term" value="F:GTPase activity"/>
    <property type="evidence" value="ECO:0007669"/>
    <property type="project" value="InterPro"/>
</dbReference>
<dbReference type="GO" id="GO:0035556">
    <property type="term" value="P:intracellular signal transduction"/>
    <property type="evidence" value="ECO:0007669"/>
    <property type="project" value="InterPro"/>
</dbReference>
<dbReference type="GO" id="GO:0016567">
    <property type="term" value="P:protein ubiquitination"/>
    <property type="evidence" value="ECO:0007669"/>
    <property type="project" value="UniProtKB-UniPathway"/>
</dbReference>
<dbReference type="CDD" id="cd04121">
    <property type="entry name" value="Rab40"/>
    <property type="match status" value="1"/>
</dbReference>
<dbReference type="CDD" id="cd03742">
    <property type="entry name" value="SOCS_Rab40"/>
    <property type="match status" value="1"/>
</dbReference>
<dbReference type="FunFam" id="3.40.50.300:FF:000371">
    <property type="entry name" value="RAB40C, member RAS oncogene family"/>
    <property type="match status" value="1"/>
</dbReference>
<dbReference type="Gene3D" id="3.40.50.300">
    <property type="entry name" value="P-loop containing nucleotide triphosphate hydrolases"/>
    <property type="match status" value="1"/>
</dbReference>
<dbReference type="InterPro" id="IPR027417">
    <property type="entry name" value="P-loop_NTPase"/>
</dbReference>
<dbReference type="InterPro" id="IPR005225">
    <property type="entry name" value="Small_GTP-bd"/>
</dbReference>
<dbReference type="InterPro" id="IPR001806">
    <property type="entry name" value="Small_GTPase"/>
</dbReference>
<dbReference type="InterPro" id="IPR050305">
    <property type="entry name" value="Small_GTPase_Rab"/>
</dbReference>
<dbReference type="InterPro" id="IPR001496">
    <property type="entry name" value="SOCS_box"/>
</dbReference>
<dbReference type="InterPro" id="IPR036036">
    <property type="entry name" value="SOCS_box-like_dom_sf"/>
</dbReference>
<dbReference type="NCBIfam" id="TIGR00231">
    <property type="entry name" value="small_GTP"/>
    <property type="match status" value="1"/>
</dbReference>
<dbReference type="PANTHER" id="PTHR47980">
    <property type="entry name" value="LD44762P"/>
    <property type="match status" value="1"/>
</dbReference>
<dbReference type="Pfam" id="PF00071">
    <property type="entry name" value="Ras"/>
    <property type="match status" value="1"/>
</dbReference>
<dbReference type="Pfam" id="PF07525">
    <property type="entry name" value="SOCS_box"/>
    <property type="match status" value="1"/>
</dbReference>
<dbReference type="PRINTS" id="PR00449">
    <property type="entry name" value="RASTRNSFRMNG"/>
</dbReference>
<dbReference type="SMART" id="SM00175">
    <property type="entry name" value="RAB"/>
    <property type="match status" value="1"/>
</dbReference>
<dbReference type="SMART" id="SM00176">
    <property type="entry name" value="RAN"/>
    <property type="match status" value="1"/>
</dbReference>
<dbReference type="SMART" id="SM00173">
    <property type="entry name" value="RAS"/>
    <property type="match status" value="1"/>
</dbReference>
<dbReference type="SMART" id="SM00174">
    <property type="entry name" value="RHO"/>
    <property type="match status" value="1"/>
</dbReference>
<dbReference type="SMART" id="SM00253">
    <property type="entry name" value="SOCS"/>
    <property type="match status" value="1"/>
</dbReference>
<dbReference type="SMART" id="SM00969">
    <property type="entry name" value="SOCS_box"/>
    <property type="match status" value="1"/>
</dbReference>
<dbReference type="SUPFAM" id="SSF52540">
    <property type="entry name" value="P-loop containing nucleoside triphosphate hydrolases"/>
    <property type="match status" value="1"/>
</dbReference>
<dbReference type="SUPFAM" id="SSF158235">
    <property type="entry name" value="SOCS box-like"/>
    <property type="match status" value="1"/>
</dbReference>
<dbReference type="PROSITE" id="PS51419">
    <property type="entry name" value="RAB"/>
    <property type="match status" value="1"/>
</dbReference>
<dbReference type="PROSITE" id="PS50225">
    <property type="entry name" value="SOCS"/>
    <property type="match status" value="1"/>
</dbReference>
<sequence>MGTQGSPVKSYDYLLKFLLVGDSDVGKGEILESLQDGAAESPYAYSNGIDYKTTTILLDGRRVKLELWDTSGQGRFCTIFRSYSRGAQGILLVYDITNRWSFDGIDRWIKEIDEHAPGVPRILVGNRLHLAFKRQVPTEQARAYAEKNCMTFFEVSPLCNFNVIESFTELSRIVLMRHGMEKIWRPNRVFSLQDLCCRAIVSCTPVHLIDKLPLPVTIKSHLKSFSMANGMNAVMMHGRSYSLASGAGGSGSKGNSLKRSKSIRPPQSPPQNCSRSNCKIS</sequence>